<name>HIS3_BORBR</name>
<feature type="chain" id="PRO_0000136462" description="Phosphoribosyl-AMP cyclohydrolase">
    <location>
        <begin position="1"/>
        <end position="134"/>
    </location>
</feature>
<feature type="binding site" evidence="1">
    <location>
        <position position="80"/>
    </location>
    <ligand>
        <name>Mg(2+)</name>
        <dbReference type="ChEBI" id="CHEBI:18420"/>
    </ligand>
</feature>
<feature type="binding site" evidence="1">
    <location>
        <position position="81"/>
    </location>
    <ligand>
        <name>Zn(2+)</name>
        <dbReference type="ChEBI" id="CHEBI:29105"/>
        <note>ligand shared between dimeric partners</note>
    </ligand>
</feature>
<feature type="binding site" evidence="1">
    <location>
        <position position="82"/>
    </location>
    <ligand>
        <name>Mg(2+)</name>
        <dbReference type="ChEBI" id="CHEBI:18420"/>
    </ligand>
</feature>
<feature type="binding site" evidence="1">
    <location>
        <position position="84"/>
    </location>
    <ligand>
        <name>Mg(2+)</name>
        <dbReference type="ChEBI" id="CHEBI:18420"/>
    </ligand>
</feature>
<feature type="binding site" evidence="1">
    <location>
        <position position="98"/>
    </location>
    <ligand>
        <name>Zn(2+)</name>
        <dbReference type="ChEBI" id="CHEBI:29105"/>
        <note>ligand shared between dimeric partners</note>
    </ligand>
</feature>
<feature type="binding site" evidence="1">
    <location>
        <position position="105"/>
    </location>
    <ligand>
        <name>Zn(2+)</name>
        <dbReference type="ChEBI" id="CHEBI:29105"/>
        <note>ligand shared between dimeric partners</note>
    </ligand>
</feature>
<dbReference type="EC" id="3.5.4.19" evidence="1"/>
<dbReference type="EMBL" id="BX640451">
    <property type="protein sequence ID" value="CAE35223.1"/>
    <property type="molecule type" value="Genomic_DNA"/>
</dbReference>
<dbReference type="RefSeq" id="WP_003815804.1">
    <property type="nucleotide sequence ID" value="NC_002927.3"/>
</dbReference>
<dbReference type="SMR" id="Q7WDX8"/>
<dbReference type="GeneID" id="93206070"/>
<dbReference type="KEGG" id="bbr:BB4860"/>
<dbReference type="eggNOG" id="COG0139">
    <property type="taxonomic scope" value="Bacteria"/>
</dbReference>
<dbReference type="HOGENOM" id="CLU_048577_5_0_4"/>
<dbReference type="UniPathway" id="UPA00031">
    <property type="reaction ID" value="UER00008"/>
</dbReference>
<dbReference type="Proteomes" id="UP000001027">
    <property type="component" value="Chromosome"/>
</dbReference>
<dbReference type="GO" id="GO:0005737">
    <property type="term" value="C:cytoplasm"/>
    <property type="evidence" value="ECO:0007669"/>
    <property type="project" value="UniProtKB-SubCell"/>
</dbReference>
<dbReference type="GO" id="GO:0000287">
    <property type="term" value="F:magnesium ion binding"/>
    <property type="evidence" value="ECO:0007669"/>
    <property type="project" value="UniProtKB-UniRule"/>
</dbReference>
<dbReference type="GO" id="GO:0004635">
    <property type="term" value="F:phosphoribosyl-AMP cyclohydrolase activity"/>
    <property type="evidence" value="ECO:0007669"/>
    <property type="project" value="UniProtKB-UniRule"/>
</dbReference>
<dbReference type="GO" id="GO:0008270">
    <property type="term" value="F:zinc ion binding"/>
    <property type="evidence" value="ECO:0007669"/>
    <property type="project" value="UniProtKB-UniRule"/>
</dbReference>
<dbReference type="GO" id="GO:0000105">
    <property type="term" value="P:L-histidine biosynthetic process"/>
    <property type="evidence" value="ECO:0007669"/>
    <property type="project" value="UniProtKB-UniRule"/>
</dbReference>
<dbReference type="FunFam" id="3.10.20.810:FF:000001">
    <property type="entry name" value="Histidine biosynthesis bifunctional protein HisIE"/>
    <property type="match status" value="1"/>
</dbReference>
<dbReference type="Gene3D" id="3.10.20.810">
    <property type="entry name" value="Phosphoribosyl-AMP cyclohydrolase"/>
    <property type="match status" value="1"/>
</dbReference>
<dbReference type="HAMAP" id="MF_01021">
    <property type="entry name" value="HisI"/>
    <property type="match status" value="1"/>
</dbReference>
<dbReference type="InterPro" id="IPR026660">
    <property type="entry name" value="PRA-CH"/>
</dbReference>
<dbReference type="InterPro" id="IPR002496">
    <property type="entry name" value="PRib_AMP_CycHydrolase_dom"/>
</dbReference>
<dbReference type="InterPro" id="IPR038019">
    <property type="entry name" value="PRib_AMP_CycHydrolase_sf"/>
</dbReference>
<dbReference type="NCBIfam" id="NF000768">
    <property type="entry name" value="PRK00051.1"/>
    <property type="match status" value="1"/>
</dbReference>
<dbReference type="PANTHER" id="PTHR42945">
    <property type="entry name" value="HISTIDINE BIOSYNTHESIS BIFUNCTIONAL PROTEIN"/>
    <property type="match status" value="1"/>
</dbReference>
<dbReference type="PANTHER" id="PTHR42945:SF1">
    <property type="entry name" value="HISTIDINE BIOSYNTHESIS BIFUNCTIONAL PROTEIN HIS7"/>
    <property type="match status" value="1"/>
</dbReference>
<dbReference type="Pfam" id="PF01502">
    <property type="entry name" value="PRA-CH"/>
    <property type="match status" value="1"/>
</dbReference>
<dbReference type="SUPFAM" id="SSF141734">
    <property type="entry name" value="HisI-like"/>
    <property type="match status" value="1"/>
</dbReference>
<organism>
    <name type="scientific">Bordetella bronchiseptica (strain ATCC BAA-588 / NCTC 13252 / RB50)</name>
    <name type="common">Alcaligenes bronchisepticus</name>
    <dbReference type="NCBI Taxonomy" id="257310"/>
    <lineage>
        <taxon>Bacteria</taxon>
        <taxon>Pseudomonadati</taxon>
        <taxon>Pseudomonadota</taxon>
        <taxon>Betaproteobacteria</taxon>
        <taxon>Burkholderiales</taxon>
        <taxon>Alcaligenaceae</taxon>
        <taxon>Bordetella</taxon>
    </lineage>
</organism>
<proteinExistence type="inferred from homology"/>
<evidence type="ECO:0000255" key="1">
    <source>
        <dbReference type="HAMAP-Rule" id="MF_01021"/>
    </source>
</evidence>
<keyword id="KW-0028">Amino-acid biosynthesis</keyword>
<keyword id="KW-0963">Cytoplasm</keyword>
<keyword id="KW-0368">Histidine biosynthesis</keyword>
<keyword id="KW-0378">Hydrolase</keyword>
<keyword id="KW-0460">Magnesium</keyword>
<keyword id="KW-0479">Metal-binding</keyword>
<keyword id="KW-0862">Zinc</keyword>
<protein>
    <recommendedName>
        <fullName evidence="1">Phosphoribosyl-AMP cyclohydrolase</fullName>
        <shortName evidence="1">PRA-CH</shortName>
        <ecNumber evidence="1">3.5.4.19</ecNumber>
    </recommendedName>
</protein>
<gene>
    <name evidence="1" type="primary">hisI</name>
    <name type="ordered locus">BB4860</name>
</gene>
<comment type="function">
    <text evidence="1">Catalyzes the hydrolysis of the adenine ring of phosphoribosyl-AMP.</text>
</comment>
<comment type="catalytic activity">
    <reaction evidence="1">
        <text>1-(5-phospho-beta-D-ribosyl)-5'-AMP + H2O = 1-(5-phospho-beta-D-ribosyl)-5-[(5-phospho-beta-D-ribosylamino)methylideneamino]imidazole-4-carboxamide</text>
        <dbReference type="Rhea" id="RHEA:20049"/>
        <dbReference type="ChEBI" id="CHEBI:15377"/>
        <dbReference type="ChEBI" id="CHEBI:58435"/>
        <dbReference type="ChEBI" id="CHEBI:59457"/>
        <dbReference type="EC" id="3.5.4.19"/>
    </reaction>
</comment>
<comment type="cofactor">
    <cofactor evidence="1">
        <name>Mg(2+)</name>
        <dbReference type="ChEBI" id="CHEBI:18420"/>
    </cofactor>
    <text evidence="1">Binds 1 Mg(2+) ion per subunit.</text>
</comment>
<comment type="cofactor">
    <cofactor evidence="1">
        <name>Zn(2+)</name>
        <dbReference type="ChEBI" id="CHEBI:29105"/>
    </cofactor>
    <text evidence="1">Binds 1 zinc ion per subunit.</text>
</comment>
<comment type="pathway">
    <text evidence="1">Amino-acid biosynthesis; L-histidine biosynthesis; L-histidine from 5-phospho-alpha-D-ribose 1-diphosphate: step 3/9.</text>
</comment>
<comment type="subunit">
    <text evidence="1">Homodimer.</text>
</comment>
<comment type="subcellular location">
    <subcellularLocation>
        <location evidence="1">Cytoplasm</location>
    </subcellularLocation>
</comment>
<comment type="similarity">
    <text evidence="1">Belongs to the PRA-CH family.</text>
</comment>
<accession>Q7WDX8</accession>
<reference key="1">
    <citation type="journal article" date="2003" name="Nat. Genet.">
        <title>Comparative analysis of the genome sequences of Bordetella pertussis, Bordetella parapertussis and Bordetella bronchiseptica.</title>
        <authorList>
            <person name="Parkhill J."/>
            <person name="Sebaihia M."/>
            <person name="Preston A."/>
            <person name="Murphy L.D."/>
            <person name="Thomson N.R."/>
            <person name="Harris D.E."/>
            <person name="Holden M.T.G."/>
            <person name="Churcher C.M."/>
            <person name="Bentley S.D."/>
            <person name="Mungall K.L."/>
            <person name="Cerdeno-Tarraga A.-M."/>
            <person name="Temple L."/>
            <person name="James K.D."/>
            <person name="Harris B."/>
            <person name="Quail M.A."/>
            <person name="Achtman M."/>
            <person name="Atkin R."/>
            <person name="Baker S."/>
            <person name="Basham D."/>
            <person name="Bason N."/>
            <person name="Cherevach I."/>
            <person name="Chillingworth T."/>
            <person name="Collins M."/>
            <person name="Cronin A."/>
            <person name="Davis P."/>
            <person name="Doggett J."/>
            <person name="Feltwell T."/>
            <person name="Goble A."/>
            <person name="Hamlin N."/>
            <person name="Hauser H."/>
            <person name="Holroyd S."/>
            <person name="Jagels K."/>
            <person name="Leather S."/>
            <person name="Moule S."/>
            <person name="Norberczak H."/>
            <person name="O'Neil S."/>
            <person name="Ormond D."/>
            <person name="Price C."/>
            <person name="Rabbinowitsch E."/>
            <person name="Rutter S."/>
            <person name="Sanders M."/>
            <person name="Saunders D."/>
            <person name="Seeger K."/>
            <person name="Sharp S."/>
            <person name="Simmonds M."/>
            <person name="Skelton J."/>
            <person name="Squares R."/>
            <person name="Squares S."/>
            <person name="Stevens K."/>
            <person name="Unwin L."/>
            <person name="Whitehead S."/>
            <person name="Barrell B.G."/>
            <person name="Maskell D.J."/>
        </authorList>
    </citation>
    <scope>NUCLEOTIDE SEQUENCE [LARGE SCALE GENOMIC DNA]</scope>
    <source>
        <strain>ATCC BAA-588 / NCTC 13252 / RB50</strain>
    </source>
</reference>
<sequence>MNTEPTWMAEVVFDENGLIPAIAQDAETGQILMVAWMNREALAETAATGRAVYWSRSRQRLWRKGEESGHAQDVHELRLDCDGDVILLKVHQNGGIACHTGRASCFYRRLEGTASQAEWITIDPVLKDPELIYK</sequence>